<sequence length="413" mass="46065">MDLSLLLPKRSWEISGGADKISRVAMSLKNIVKNKYKAIGRRGRSHIAPEGSSVSSSLSTNEGLNQSIWVDLPPELLLDIIQRIESEQSLWPGRRDVVACASVCKSWREMTKEVVKVPELSGLITFPISLRQPGPRDAPIQCFIKRERATGIYRLYLGLSPALSGDKSKLLLSAKRVRRATGAEFVVSLSGNDFSRSSSNYIGKLRSNFLGTKFTVYENQPPPFNRKLPPSMQVSPWVSSSSSSYNIASILYELNVLRTRGPRRMQCIMHSIPISAIQEGGKIQSPTEFTNQGKKKKKPLMDFCSGNLGGESVIKEPLILKNKSPRWHEQLQCWCLNFKGRVTVASVKNFQLVAAAAEAGKNMNIPEEEQDRVILQFGKIGKDIFTMDYRYPISAFQAFAICLSSFDTKPVCE</sequence>
<organism>
    <name type="scientific">Arabidopsis thaliana</name>
    <name type="common">Mouse-ear cress</name>
    <dbReference type="NCBI Taxonomy" id="3702"/>
    <lineage>
        <taxon>Eukaryota</taxon>
        <taxon>Viridiplantae</taxon>
        <taxon>Streptophyta</taxon>
        <taxon>Embryophyta</taxon>
        <taxon>Tracheophyta</taxon>
        <taxon>Spermatophyta</taxon>
        <taxon>Magnoliopsida</taxon>
        <taxon>eudicotyledons</taxon>
        <taxon>Gunneridae</taxon>
        <taxon>Pentapetalae</taxon>
        <taxon>rosids</taxon>
        <taxon>malvids</taxon>
        <taxon>Brassicales</taxon>
        <taxon>Brassicaceae</taxon>
        <taxon>Camelineae</taxon>
        <taxon>Arabidopsis</taxon>
    </lineage>
</organism>
<evidence type="ECO:0000255" key="1">
    <source>
        <dbReference type="PROSITE-ProRule" id="PRU00080"/>
    </source>
</evidence>
<evidence type="ECO:0000269" key="2">
    <source>
    </source>
</evidence>
<evidence type="ECO:0000303" key="3">
    <source>
    </source>
</evidence>
<evidence type="ECO:0000305" key="4"/>
<evidence type="ECO:0000312" key="5">
    <source>
        <dbReference type="Araport" id="AT1G47270"/>
    </source>
</evidence>
<evidence type="ECO:0000312" key="6">
    <source>
        <dbReference type="EMBL" id="AAG52638.1"/>
    </source>
</evidence>
<proteinExistence type="evidence at transcript level"/>
<accession>Q0WPY0</accession>
<accession>Q9C6B4</accession>
<keyword id="KW-0025">Alternative splicing</keyword>
<keyword id="KW-1185">Reference proteome</keyword>
<dbReference type="EMBL" id="AC079677">
    <property type="protein sequence ID" value="AAG52638.1"/>
    <property type="status" value="ALT_SEQ"/>
    <property type="molecule type" value="Genomic_DNA"/>
</dbReference>
<dbReference type="EMBL" id="CP002684">
    <property type="protein sequence ID" value="AEE32146.1"/>
    <property type="molecule type" value="Genomic_DNA"/>
</dbReference>
<dbReference type="EMBL" id="AK228930">
    <property type="protein sequence ID" value="BAF00819.1"/>
    <property type="molecule type" value="mRNA"/>
</dbReference>
<dbReference type="EMBL" id="AF487268">
    <property type="protein sequence ID" value="AAQ06241.1"/>
    <property type="molecule type" value="mRNA"/>
</dbReference>
<dbReference type="PIR" id="E96513">
    <property type="entry name" value="E96513"/>
</dbReference>
<dbReference type="RefSeq" id="NP_001322089.1">
    <property type="nucleotide sequence ID" value="NM_001333268.1"/>
</dbReference>
<dbReference type="RefSeq" id="NP_175160.2">
    <molecule id="Q0WPY0-1"/>
    <property type="nucleotide sequence ID" value="NM_103621.2"/>
</dbReference>
<dbReference type="SMR" id="Q0WPY0"/>
<dbReference type="BioGRID" id="26355">
    <property type="interactions" value="5"/>
</dbReference>
<dbReference type="FunCoup" id="Q0WPY0">
    <property type="interactions" value="534"/>
</dbReference>
<dbReference type="STRING" id="3702.Q0WPY0"/>
<dbReference type="PaxDb" id="3702-AT1G47270.1"/>
<dbReference type="EnsemblPlants" id="AT1G47270.1">
    <molecule id="Q0WPY0-1"/>
    <property type="protein sequence ID" value="AT1G47270.1"/>
    <property type="gene ID" value="AT1G47270"/>
</dbReference>
<dbReference type="GeneID" id="841130"/>
<dbReference type="Gramene" id="AT1G47270.1">
    <molecule id="Q0WPY0-1"/>
    <property type="protein sequence ID" value="AT1G47270.1"/>
    <property type="gene ID" value="AT1G47270"/>
</dbReference>
<dbReference type="KEGG" id="ath:AT1G47270"/>
<dbReference type="Araport" id="AT1G47270"/>
<dbReference type="TAIR" id="AT1G47270">
    <property type="gene designation" value="TLP6"/>
</dbReference>
<dbReference type="eggNOG" id="KOG2502">
    <property type="taxonomic scope" value="Eukaryota"/>
</dbReference>
<dbReference type="InParanoid" id="Q0WPY0"/>
<dbReference type="PhylomeDB" id="Q0WPY0"/>
<dbReference type="PRO" id="PR:Q0WPY0"/>
<dbReference type="Proteomes" id="UP000006548">
    <property type="component" value="Chromosome 1"/>
</dbReference>
<dbReference type="ExpressionAtlas" id="Q0WPY0">
    <property type="expression patterns" value="baseline and differential"/>
</dbReference>
<dbReference type="GO" id="GO:0000976">
    <property type="term" value="F:transcription cis-regulatory region binding"/>
    <property type="evidence" value="ECO:0000353"/>
    <property type="project" value="TAIR"/>
</dbReference>
<dbReference type="GO" id="GO:0009555">
    <property type="term" value="P:pollen development"/>
    <property type="evidence" value="ECO:0000315"/>
    <property type="project" value="TAIR"/>
</dbReference>
<dbReference type="GO" id="GO:0006355">
    <property type="term" value="P:regulation of DNA-templated transcription"/>
    <property type="evidence" value="ECO:0000304"/>
    <property type="project" value="TAIR"/>
</dbReference>
<dbReference type="CDD" id="cd22153">
    <property type="entry name" value="F-box_AtTLP-like"/>
    <property type="match status" value="1"/>
</dbReference>
<dbReference type="FunFam" id="1.20.1280.50:FF:000047">
    <property type="entry name" value="Tubby-like F-box protein"/>
    <property type="match status" value="1"/>
</dbReference>
<dbReference type="Gene3D" id="1.20.1280.50">
    <property type="match status" value="1"/>
</dbReference>
<dbReference type="Gene3D" id="3.20.90.10">
    <property type="entry name" value="Tubby Protein, Chain A"/>
    <property type="match status" value="1"/>
</dbReference>
<dbReference type="InterPro" id="IPR036047">
    <property type="entry name" value="F-box-like_dom_sf"/>
</dbReference>
<dbReference type="InterPro" id="IPR001810">
    <property type="entry name" value="F-box_dom"/>
</dbReference>
<dbReference type="InterPro" id="IPR025659">
    <property type="entry name" value="Tubby-like_C"/>
</dbReference>
<dbReference type="InterPro" id="IPR000007">
    <property type="entry name" value="Tubby_C"/>
</dbReference>
<dbReference type="InterPro" id="IPR018066">
    <property type="entry name" value="Tubby_C_CS"/>
</dbReference>
<dbReference type="PANTHER" id="PTHR16517:SF104">
    <property type="entry name" value="TUBBY-LIKE F-BOX PROTEIN 6"/>
    <property type="match status" value="1"/>
</dbReference>
<dbReference type="PANTHER" id="PTHR16517">
    <property type="entry name" value="TUBBY-RELATED"/>
    <property type="match status" value="1"/>
</dbReference>
<dbReference type="Pfam" id="PF12937">
    <property type="entry name" value="F-box-like"/>
    <property type="match status" value="1"/>
</dbReference>
<dbReference type="Pfam" id="PF01167">
    <property type="entry name" value="Tub"/>
    <property type="match status" value="1"/>
</dbReference>
<dbReference type="PRINTS" id="PR01573">
    <property type="entry name" value="SUPERTUBBY"/>
</dbReference>
<dbReference type="SUPFAM" id="SSF81383">
    <property type="entry name" value="F-box domain"/>
    <property type="match status" value="1"/>
</dbReference>
<dbReference type="SUPFAM" id="SSF54518">
    <property type="entry name" value="Tubby C-terminal domain-like"/>
    <property type="match status" value="1"/>
</dbReference>
<dbReference type="PROSITE" id="PS01200">
    <property type="entry name" value="TUB_1"/>
    <property type="match status" value="1"/>
</dbReference>
<reference key="1">
    <citation type="journal article" date="2000" name="Nature">
        <title>Sequence and analysis of chromosome 1 of the plant Arabidopsis thaliana.</title>
        <authorList>
            <person name="Theologis A."/>
            <person name="Ecker J.R."/>
            <person name="Palm C.J."/>
            <person name="Federspiel N.A."/>
            <person name="Kaul S."/>
            <person name="White O."/>
            <person name="Alonso J."/>
            <person name="Altafi H."/>
            <person name="Araujo R."/>
            <person name="Bowman C.L."/>
            <person name="Brooks S.Y."/>
            <person name="Buehler E."/>
            <person name="Chan A."/>
            <person name="Chao Q."/>
            <person name="Chen H."/>
            <person name="Cheuk R.F."/>
            <person name="Chin C.W."/>
            <person name="Chung M.K."/>
            <person name="Conn L."/>
            <person name="Conway A.B."/>
            <person name="Conway A.R."/>
            <person name="Creasy T.H."/>
            <person name="Dewar K."/>
            <person name="Dunn P."/>
            <person name="Etgu P."/>
            <person name="Feldblyum T.V."/>
            <person name="Feng J.-D."/>
            <person name="Fong B."/>
            <person name="Fujii C.Y."/>
            <person name="Gill J.E."/>
            <person name="Goldsmith A.D."/>
            <person name="Haas B."/>
            <person name="Hansen N.F."/>
            <person name="Hughes B."/>
            <person name="Huizar L."/>
            <person name="Hunter J.L."/>
            <person name="Jenkins J."/>
            <person name="Johnson-Hopson C."/>
            <person name="Khan S."/>
            <person name="Khaykin E."/>
            <person name="Kim C.J."/>
            <person name="Koo H.L."/>
            <person name="Kremenetskaia I."/>
            <person name="Kurtz D.B."/>
            <person name="Kwan A."/>
            <person name="Lam B."/>
            <person name="Langin-Hooper S."/>
            <person name="Lee A."/>
            <person name="Lee J.M."/>
            <person name="Lenz C.A."/>
            <person name="Li J.H."/>
            <person name="Li Y.-P."/>
            <person name="Lin X."/>
            <person name="Liu S.X."/>
            <person name="Liu Z.A."/>
            <person name="Luros J.S."/>
            <person name="Maiti R."/>
            <person name="Marziali A."/>
            <person name="Militscher J."/>
            <person name="Miranda M."/>
            <person name="Nguyen M."/>
            <person name="Nierman W.C."/>
            <person name="Osborne B.I."/>
            <person name="Pai G."/>
            <person name="Peterson J."/>
            <person name="Pham P.K."/>
            <person name="Rizzo M."/>
            <person name="Rooney T."/>
            <person name="Rowley D."/>
            <person name="Sakano H."/>
            <person name="Salzberg S.L."/>
            <person name="Schwartz J.R."/>
            <person name="Shinn P."/>
            <person name="Southwick A.M."/>
            <person name="Sun H."/>
            <person name="Tallon L.J."/>
            <person name="Tambunga G."/>
            <person name="Toriumi M.J."/>
            <person name="Town C.D."/>
            <person name="Utterback T."/>
            <person name="Van Aken S."/>
            <person name="Vaysberg M."/>
            <person name="Vysotskaia V.S."/>
            <person name="Walker M."/>
            <person name="Wu D."/>
            <person name="Yu G."/>
            <person name="Fraser C.M."/>
            <person name="Venter J.C."/>
            <person name="Davis R.W."/>
        </authorList>
    </citation>
    <scope>NUCLEOTIDE SEQUENCE [LARGE SCALE GENOMIC DNA]</scope>
    <source>
        <strain>cv. Columbia</strain>
    </source>
</reference>
<reference key="2">
    <citation type="journal article" date="2017" name="Plant J.">
        <title>Araport11: a complete reannotation of the Arabidopsis thaliana reference genome.</title>
        <authorList>
            <person name="Cheng C.Y."/>
            <person name="Krishnakumar V."/>
            <person name="Chan A.P."/>
            <person name="Thibaud-Nissen F."/>
            <person name="Schobel S."/>
            <person name="Town C.D."/>
        </authorList>
    </citation>
    <scope>GENOME REANNOTATION</scope>
    <source>
        <strain>cv. Columbia</strain>
    </source>
</reference>
<reference key="3">
    <citation type="submission" date="2006-07" db="EMBL/GenBank/DDBJ databases">
        <title>Large-scale analysis of RIKEN Arabidopsis full-length (RAFL) cDNAs.</title>
        <authorList>
            <person name="Totoki Y."/>
            <person name="Seki M."/>
            <person name="Ishida J."/>
            <person name="Nakajima M."/>
            <person name="Enju A."/>
            <person name="Kamiya A."/>
            <person name="Narusaka M."/>
            <person name="Shin-i T."/>
            <person name="Nakagawa M."/>
            <person name="Sakamoto N."/>
            <person name="Oishi K."/>
            <person name="Kohara Y."/>
            <person name="Kobayashi M."/>
            <person name="Toyoda A."/>
            <person name="Sakaki Y."/>
            <person name="Sakurai T."/>
            <person name="Iida K."/>
            <person name="Akiyama K."/>
            <person name="Satou M."/>
            <person name="Toyoda T."/>
            <person name="Konagaya A."/>
            <person name="Carninci P."/>
            <person name="Kawai J."/>
            <person name="Hayashizaki Y."/>
            <person name="Shinozaki K."/>
        </authorList>
    </citation>
    <scope>NUCLEOTIDE SEQUENCE [LARGE SCALE MRNA]</scope>
    <source>
        <strain>cv. Columbia</strain>
    </source>
</reference>
<reference key="4">
    <citation type="journal article" date="2004" name="Plant Physiol.">
        <title>Molecular analyses of the Arabidopsis TUBBY-like protein gene family.</title>
        <authorList>
            <person name="Lai C.-P."/>
            <person name="Lee C.-L."/>
            <person name="Chen P.-H."/>
            <person name="Wu S.-H."/>
            <person name="Yang C.-C."/>
            <person name="Shaw J.-F."/>
        </authorList>
    </citation>
    <scope>NUCLEOTIDE SEQUENCE [MRNA] OF 26-413</scope>
    <scope>TISSUE SPECIFICITY</scope>
    <scope>GENE FAMILY</scope>
    <scope>NOMENCLATURE</scope>
</reference>
<feature type="chain" id="PRO_0000272234" description="Tubby-like F-box protein 6">
    <location>
        <begin position="1"/>
        <end position="413"/>
    </location>
</feature>
<feature type="domain" description="F-box" evidence="1">
    <location>
        <begin position="67"/>
        <end position="122"/>
    </location>
</feature>
<protein>
    <recommendedName>
        <fullName evidence="3">Tubby-like F-box protein 6</fullName>
        <shortName evidence="3">AtTLP6</shortName>
    </recommendedName>
</protein>
<comment type="alternative products">
    <event type="alternative splicing"/>
    <isoform>
        <id>Q0WPY0-1</id>
        <name>1</name>
        <sequence type="displayed"/>
    </isoform>
    <text>A number of isoforms are produced. According to EST sequences.</text>
</comment>
<comment type="tissue specificity">
    <text evidence="2">Ubiquitous, with higher levels in flowers.</text>
</comment>
<comment type="similarity">
    <text evidence="4">Belongs to the TUB family.</text>
</comment>
<comment type="sequence caution" evidence="4">
    <conflict type="erroneous gene model prediction">
        <sequence resource="EMBL-CDS" id="AAG52638"/>
    </conflict>
</comment>
<gene>
    <name evidence="4" type="primary">TULP6</name>
    <name evidence="3" type="synonym">TLP6</name>
    <name evidence="5" type="ordered locus">At1g47270</name>
    <name evidence="6" type="ORF">F8G22.1</name>
</gene>
<name>TLP6_ARATH</name>